<evidence type="ECO:0000255" key="1">
    <source>
        <dbReference type="HAMAP-Rule" id="MF_00075"/>
    </source>
</evidence>
<keyword id="KW-0963">Cytoplasm</keyword>
<keyword id="KW-0396">Initiation factor</keyword>
<keyword id="KW-0648">Protein biosynthesis</keyword>
<keyword id="KW-0694">RNA-binding</keyword>
<keyword id="KW-0699">rRNA-binding</keyword>
<reference key="1">
    <citation type="submission" date="2006-11" db="EMBL/GenBank/DDBJ databases">
        <title>Sequence of Campylobacter fetus subsp. fetus 82-40.</title>
        <authorList>
            <person name="Fouts D.E."/>
            <person name="Nelson K.E."/>
        </authorList>
    </citation>
    <scope>NUCLEOTIDE SEQUENCE [LARGE SCALE GENOMIC DNA]</scope>
    <source>
        <strain>82-40</strain>
    </source>
</reference>
<name>IF1_CAMFF</name>
<proteinExistence type="inferred from homology"/>
<feature type="chain" id="PRO_0000338792" description="Translation initiation factor IF-1">
    <location>
        <begin position="1"/>
        <end position="72"/>
    </location>
</feature>
<feature type="domain" description="S1-like" evidence="1">
    <location>
        <begin position="1"/>
        <end position="72"/>
    </location>
</feature>
<protein>
    <recommendedName>
        <fullName evidence="1">Translation initiation factor IF-1</fullName>
    </recommendedName>
</protein>
<sequence>MAKDDVIEIDGNVVEALPNATFKVELDNKHIILCHIAGKMRMHYIKIMPGDRVKVELTPYSLDKGRITYRYK</sequence>
<gene>
    <name evidence="1" type="primary">infA</name>
    <name type="ordered locus">CFF8240_0055</name>
</gene>
<organism>
    <name type="scientific">Campylobacter fetus subsp. fetus (strain 82-40)</name>
    <dbReference type="NCBI Taxonomy" id="360106"/>
    <lineage>
        <taxon>Bacteria</taxon>
        <taxon>Pseudomonadati</taxon>
        <taxon>Campylobacterota</taxon>
        <taxon>Epsilonproteobacteria</taxon>
        <taxon>Campylobacterales</taxon>
        <taxon>Campylobacteraceae</taxon>
        <taxon>Campylobacter</taxon>
    </lineage>
</organism>
<comment type="function">
    <text evidence="1">One of the essential components for the initiation of protein synthesis. Stabilizes the binding of IF-2 and IF-3 on the 30S subunit to which N-formylmethionyl-tRNA(fMet) subsequently binds. Helps modulate mRNA selection, yielding the 30S pre-initiation complex (PIC). Upon addition of the 50S ribosomal subunit IF-1, IF-2 and IF-3 are released leaving the mature 70S translation initiation complex.</text>
</comment>
<comment type="subunit">
    <text evidence="1">Component of the 30S ribosomal translation pre-initiation complex which assembles on the 30S ribosome in the order IF-2 and IF-3, IF-1 and N-formylmethionyl-tRNA(fMet); mRNA recruitment can occur at any time during PIC assembly.</text>
</comment>
<comment type="subcellular location">
    <subcellularLocation>
        <location evidence="1">Cytoplasm</location>
    </subcellularLocation>
</comment>
<comment type="similarity">
    <text evidence="1">Belongs to the IF-1 family.</text>
</comment>
<dbReference type="EMBL" id="CP000487">
    <property type="protein sequence ID" value="ABK82262.1"/>
    <property type="molecule type" value="Genomic_DNA"/>
</dbReference>
<dbReference type="RefSeq" id="WP_002848031.1">
    <property type="nucleotide sequence ID" value="NC_008599.1"/>
</dbReference>
<dbReference type="SMR" id="A0RM32"/>
<dbReference type="GeneID" id="93112510"/>
<dbReference type="KEGG" id="cff:CFF8240_0055"/>
<dbReference type="eggNOG" id="COG0361">
    <property type="taxonomic scope" value="Bacteria"/>
</dbReference>
<dbReference type="HOGENOM" id="CLU_151267_1_0_7"/>
<dbReference type="Proteomes" id="UP000000760">
    <property type="component" value="Chromosome"/>
</dbReference>
<dbReference type="GO" id="GO:0005829">
    <property type="term" value="C:cytosol"/>
    <property type="evidence" value="ECO:0007669"/>
    <property type="project" value="TreeGrafter"/>
</dbReference>
<dbReference type="GO" id="GO:0043022">
    <property type="term" value="F:ribosome binding"/>
    <property type="evidence" value="ECO:0007669"/>
    <property type="project" value="UniProtKB-UniRule"/>
</dbReference>
<dbReference type="GO" id="GO:0019843">
    <property type="term" value="F:rRNA binding"/>
    <property type="evidence" value="ECO:0007669"/>
    <property type="project" value="UniProtKB-UniRule"/>
</dbReference>
<dbReference type="GO" id="GO:0003743">
    <property type="term" value="F:translation initiation factor activity"/>
    <property type="evidence" value="ECO:0007669"/>
    <property type="project" value="UniProtKB-UniRule"/>
</dbReference>
<dbReference type="CDD" id="cd04451">
    <property type="entry name" value="S1_IF1"/>
    <property type="match status" value="1"/>
</dbReference>
<dbReference type="FunFam" id="2.40.50.140:FF:000002">
    <property type="entry name" value="Translation initiation factor IF-1"/>
    <property type="match status" value="1"/>
</dbReference>
<dbReference type="Gene3D" id="2.40.50.140">
    <property type="entry name" value="Nucleic acid-binding proteins"/>
    <property type="match status" value="1"/>
</dbReference>
<dbReference type="HAMAP" id="MF_00075">
    <property type="entry name" value="IF_1"/>
    <property type="match status" value="1"/>
</dbReference>
<dbReference type="InterPro" id="IPR012340">
    <property type="entry name" value="NA-bd_OB-fold"/>
</dbReference>
<dbReference type="InterPro" id="IPR006196">
    <property type="entry name" value="RNA-binding_domain_S1_IF1"/>
</dbReference>
<dbReference type="InterPro" id="IPR004368">
    <property type="entry name" value="TIF_IF1"/>
</dbReference>
<dbReference type="NCBIfam" id="TIGR00008">
    <property type="entry name" value="infA"/>
    <property type="match status" value="1"/>
</dbReference>
<dbReference type="PANTHER" id="PTHR33370">
    <property type="entry name" value="TRANSLATION INITIATION FACTOR IF-1, CHLOROPLASTIC"/>
    <property type="match status" value="1"/>
</dbReference>
<dbReference type="PANTHER" id="PTHR33370:SF1">
    <property type="entry name" value="TRANSLATION INITIATION FACTOR IF-1, CHLOROPLASTIC"/>
    <property type="match status" value="1"/>
</dbReference>
<dbReference type="Pfam" id="PF01176">
    <property type="entry name" value="eIF-1a"/>
    <property type="match status" value="1"/>
</dbReference>
<dbReference type="SUPFAM" id="SSF50249">
    <property type="entry name" value="Nucleic acid-binding proteins"/>
    <property type="match status" value="1"/>
</dbReference>
<dbReference type="PROSITE" id="PS50832">
    <property type="entry name" value="S1_IF1_TYPE"/>
    <property type="match status" value="1"/>
</dbReference>
<accession>A0RM32</accession>